<gene>
    <name evidence="1" type="primary">leuS</name>
    <name type="ordered locus">APP7_0931</name>
</gene>
<proteinExistence type="inferred from homology"/>
<comment type="catalytic activity">
    <reaction evidence="1">
        <text>tRNA(Leu) + L-leucine + ATP = L-leucyl-tRNA(Leu) + AMP + diphosphate</text>
        <dbReference type="Rhea" id="RHEA:11688"/>
        <dbReference type="Rhea" id="RHEA-COMP:9613"/>
        <dbReference type="Rhea" id="RHEA-COMP:9622"/>
        <dbReference type="ChEBI" id="CHEBI:30616"/>
        <dbReference type="ChEBI" id="CHEBI:33019"/>
        <dbReference type="ChEBI" id="CHEBI:57427"/>
        <dbReference type="ChEBI" id="CHEBI:78442"/>
        <dbReference type="ChEBI" id="CHEBI:78494"/>
        <dbReference type="ChEBI" id="CHEBI:456215"/>
        <dbReference type="EC" id="6.1.1.4"/>
    </reaction>
</comment>
<comment type="subcellular location">
    <subcellularLocation>
        <location evidence="1">Cytoplasm</location>
    </subcellularLocation>
</comment>
<comment type="similarity">
    <text evidence="1">Belongs to the class-I aminoacyl-tRNA synthetase family.</text>
</comment>
<accession>B3H1L1</accession>
<evidence type="ECO:0000255" key="1">
    <source>
        <dbReference type="HAMAP-Rule" id="MF_00049"/>
    </source>
</evidence>
<reference key="1">
    <citation type="submission" date="2008-06" db="EMBL/GenBank/DDBJ databases">
        <title>Genome and proteome analysis of A. pleuropneumoniae serotype 7.</title>
        <authorList>
            <person name="Linke B."/>
            <person name="Buettner F."/>
            <person name="Martinez-Arias R."/>
            <person name="Goesmann A."/>
            <person name="Baltes N."/>
            <person name="Tegetmeyer H."/>
            <person name="Singh M."/>
            <person name="Gerlach G.F."/>
        </authorList>
    </citation>
    <scope>NUCLEOTIDE SEQUENCE [LARGE SCALE GENOMIC DNA]</scope>
    <source>
        <strain>AP76</strain>
    </source>
</reference>
<organism>
    <name type="scientific">Actinobacillus pleuropneumoniae serotype 7 (strain AP76)</name>
    <dbReference type="NCBI Taxonomy" id="537457"/>
    <lineage>
        <taxon>Bacteria</taxon>
        <taxon>Pseudomonadati</taxon>
        <taxon>Pseudomonadota</taxon>
        <taxon>Gammaproteobacteria</taxon>
        <taxon>Pasteurellales</taxon>
        <taxon>Pasteurellaceae</taxon>
        <taxon>Actinobacillus</taxon>
    </lineage>
</organism>
<protein>
    <recommendedName>
        <fullName evidence="1">Leucine--tRNA ligase</fullName>
        <ecNumber evidence="1">6.1.1.4</ecNumber>
    </recommendedName>
    <alternativeName>
        <fullName evidence="1">Leucyl-tRNA synthetase</fullName>
        <shortName evidence="1">LeuRS</shortName>
    </alternativeName>
</protein>
<dbReference type="EC" id="6.1.1.4" evidence="1"/>
<dbReference type="EMBL" id="CP001091">
    <property type="protein sequence ID" value="ACE61583.1"/>
    <property type="molecule type" value="Genomic_DNA"/>
</dbReference>
<dbReference type="SMR" id="B3H1L1"/>
<dbReference type="KEGG" id="apa:APP7_0931"/>
<dbReference type="HOGENOM" id="CLU_004427_0_0_6"/>
<dbReference type="Proteomes" id="UP000001226">
    <property type="component" value="Chromosome"/>
</dbReference>
<dbReference type="GO" id="GO:0005829">
    <property type="term" value="C:cytosol"/>
    <property type="evidence" value="ECO:0007669"/>
    <property type="project" value="TreeGrafter"/>
</dbReference>
<dbReference type="GO" id="GO:0002161">
    <property type="term" value="F:aminoacyl-tRNA deacylase activity"/>
    <property type="evidence" value="ECO:0007669"/>
    <property type="project" value="InterPro"/>
</dbReference>
<dbReference type="GO" id="GO:0005524">
    <property type="term" value="F:ATP binding"/>
    <property type="evidence" value="ECO:0007669"/>
    <property type="project" value="UniProtKB-UniRule"/>
</dbReference>
<dbReference type="GO" id="GO:0004823">
    <property type="term" value="F:leucine-tRNA ligase activity"/>
    <property type="evidence" value="ECO:0007669"/>
    <property type="project" value="UniProtKB-UniRule"/>
</dbReference>
<dbReference type="GO" id="GO:0006429">
    <property type="term" value="P:leucyl-tRNA aminoacylation"/>
    <property type="evidence" value="ECO:0007669"/>
    <property type="project" value="UniProtKB-UniRule"/>
</dbReference>
<dbReference type="CDD" id="cd07958">
    <property type="entry name" value="Anticodon_Ia_Leu_BEm"/>
    <property type="match status" value="1"/>
</dbReference>
<dbReference type="CDD" id="cd00812">
    <property type="entry name" value="LeuRS_core"/>
    <property type="match status" value="1"/>
</dbReference>
<dbReference type="FunFam" id="1.10.730.10:FF:000002">
    <property type="entry name" value="Leucine--tRNA ligase"/>
    <property type="match status" value="1"/>
</dbReference>
<dbReference type="FunFam" id="2.20.28.290:FF:000001">
    <property type="entry name" value="Leucine--tRNA ligase"/>
    <property type="match status" value="1"/>
</dbReference>
<dbReference type="FunFam" id="3.40.50.620:FF:000003">
    <property type="entry name" value="Leucine--tRNA ligase"/>
    <property type="match status" value="1"/>
</dbReference>
<dbReference type="FunFam" id="3.40.50.620:FF:000051">
    <property type="entry name" value="Leucine--tRNA ligase"/>
    <property type="match status" value="1"/>
</dbReference>
<dbReference type="FunFam" id="3.90.740.10:FF:000012">
    <property type="entry name" value="Leucine--tRNA ligase"/>
    <property type="match status" value="1"/>
</dbReference>
<dbReference type="Gene3D" id="2.20.28.290">
    <property type="match status" value="1"/>
</dbReference>
<dbReference type="Gene3D" id="3.40.50.620">
    <property type="entry name" value="HUPs"/>
    <property type="match status" value="2"/>
</dbReference>
<dbReference type="Gene3D" id="1.10.730.10">
    <property type="entry name" value="Isoleucyl-tRNA Synthetase, Domain 1"/>
    <property type="match status" value="1"/>
</dbReference>
<dbReference type="HAMAP" id="MF_00049_B">
    <property type="entry name" value="Leu_tRNA_synth_B"/>
    <property type="match status" value="1"/>
</dbReference>
<dbReference type="InterPro" id="IPR001412">
    <property type="entry name" value="aa-tRNA-synth_I_CS"/>
</dbReference>
<dbReference type="InterPro" id="IPR002300">
    <property type="entry name" value="aa-tRNA-synth_Ia"/>
</dbReference>
<dbReference type="InterPro" id="IPR002302">
    <property type="entry name" value="Leu-tRNA-ligase"/>
</dbReference>
<dbReference type="InterPro" id="IPR025709">
    <property type="entry name" value="Leu_tRNA-synth_edit"/>
</dbReference>
<dbReference type="InterPro" id="IPR013155">
    <property type="entry name" value="M/V/L/I-tRNA-synth_anticd-bd"/>
</dbReference>
<dbReference type="InterPro" id="IPR015413">
    <property type="entry name" value="Methionyl/Leucyl_tRNA_Synth"/>
</dbReference>
<dbReference type="InterPro" id="IPR014729">
    <property type="entry name" value="Rossmann-like_a/b/a_fold"/>
</dbReference>
<dbReference type="InterPro" id="IPR009080">
    <property type="entry name" value="tRNAsynth_Ia_anticodon-bd"/>
</dbReference>
<dbReference type="InterPro" id="IPR009008">
    <property type="entry name" value="Val/Leu/Ile-tRNA-synth_edit"/>
</dbReference>
<dbReference type="NCBIfam" id="TIGR00396">
    <property type="entry name" value="leuS_bact"/>
    <property type="match status" value="1"/>
</dbReference>
<dbReference type="PANTHER" id="PTHR43740:SF2">
    <property type="entry name" value="LEUCINE--TRNA LIGASE, MITOCHONDRIAL"/>
    <property type="match status" value="1"/>
</dbReference>
<dbReference type="PANTHER" id="PTHR43740">
    <property type="entry name" value="LEUCYL-TRNA SYNTHETASE"/>
    <property type="match status" value="1"/>
</dbReference>
<dbReference type="Pfam" id="PF08264">
    <property type="entry name" value="Anticodon_1"/>
    <property type="match status" value="1"/>
</dbReference>
<dbReference type="Pfam" id="PF00133">
    <property type="entry name" value="tRNA-synt_1"/>
    <property type="match status" value="2"/>
</dbReference>
<dbReference type="Pfam" id="PF13603">
    <property type="entry name" value="tRNA-synt_1_2"/>
    <property type="match status" value="1"/>
</dbReference>
<dbReference type="Pfam" id="PF09334">
    <property type="entry name" value="tRNA-synt_1g"/>
    <property type="match status" value="1"/>
</dbReference>
<dbReference type="PRINTS" id="PR00985">
    <property type="entry name" value="TRNASYNTHLEU"/>
</dbReference>
<dbReference type="SUPFAM" id="SSF47323">
    <property type="entry name" value="Anticodon-binding domain of a subclass of class I aminoacyl-tRNA synthetases"/>
    <property type="match status" value="1"/>
</dbReference>
<dbReference type="SUPFAM" id="SSF52374">
    <property type="entry name" value="Nucleotidylyl transferase"/>
    <property type="match status" value="1"/>
</dbReference>
<dbReference type="SUPFAM" id="SSF50677">
    <property type="entry name" value="ValRS/IleRS/LeuRS editing domain"/>
    <property type="match status" value="1"/>
</dbReference>
<dbReference type="PROSITE" id="PS00178">
    <property type="entry name" value="AA_TRNA_LIGASE_I"/>
    <property type="match status" value="1"/>
</dbReference>
<name>SYL_ACTP7</name>
<keyword id="KW-0030">Aminoacyl-tRNA synthetase</keyword>
<keyword id="KW-0067">ATP-binding</keyword>
<keyword id="KW-0963">Cytoplasm</keyword>
<keyword id="KW-0436">Ligase</keyword>
<keyword id="KW-0547">Nucleotide-binding</keyword>
<keyword id="KW-0648">Protein biosynthesis</keyword>
<feature type="chain" id="PRO_1000091282" description="Leucine--tRNA ligase">
    <location>
        <begin position="1"/>
        <end position="834"/>
    </location>
</feature>
<feature type="short sequence motif" description="'HIGH' region">
    <location>
        <begin position="42"/>
        <end position="52"/>
    </location>
</feature>
<feature type="short sequence motif" description="'KMSKS' region">
    <location>
        <begin position="619"/>
        <end position="623"/>
    </location>
</feature>
<feature type="binding site" evidence="1">
    <location>
        <position position="622"/>
    </location>
    <ligand>
        <name>ATP</name>
        <dbReference type="ChEBI" id="CHEBI:30616"/>
    </ligand>
</feature>
<sequence length="834" mass="95323">MQQQYNPSAIEPKVQQFWAENKVFKAVKDVTKEKYYCLSMLPYPSGKLHMGHVRNYTIGDVVSRYQRMIGKNVLQPMGWDAFGLPAEGAAVKNNTAPAKWTYENIEYMKGQLKMLGFSYDWDREVTTCRQEYYKWEQWFFTELYKKGLVYKKTSTVNWCPNDATVLANEQVHEGCCWRCDTPVEQREIPQWFIKITDYAEELLTHLDNLPQWPDQVKTMQRNWIGRSEGVEITFKIAGSNAELPVYTTRPDTFFGVSYVAIAAAHPLAEMAAENNPALAEFIREAKNTKVAEAELATMEKKGMATGLFAIHPLTGKEVPVWVANFVLMHYGTGAVMAVPAHDERDFEFAQKYGLQINQVIQPLDGSEWDFSKAAYTEHGKLINSAEFDDLNFEQAFNAIADKLESMKVGKRQVNFRLRDWGVSRQRYWGAPIPMMTTEDGEVVTVPMQDLPVILPEDVVMNGVQSPIKADPEWAKTTYNGKPALKETDTFDTFMESSWYYARYTCPQYHEGMLDSDEANYWLPVDQYIGGIEHATMHLLYFRFFHKLLRDAGILNSDEPATKLLCQGMVLADAFYYTSPTNERIWVSPTQVTLERDEKGRIIKATDPEGRELVHSGMTKMSKSKNNGIDPQEMVEKYGADTVRLFMMFASPAEMTLEWQESGVEGAKRFLGRVWNLVYEYSQNPATAALDVAALSKAQKELRRDVHKTIAKVSDDIGRRQTFNTAIAAIMELMNKLTKAPLENEQDKAVMAEALSAVVRMLYPITPHICFELWQALGNNDTIDFAPWVVADESAMVEDEKLVVVQVNGKVRVKLPFRQQQPKMKSKQLRKRMQT</sequence>